<proteinExistence type="inferred from homology"/>
<name>Y063_SYNY3</name>
<accession>Q55147</accession>
<organism>
    <name type="scientific">Synechocystis sp. (strain ATCC 27184 / PCC 6803 / Kazusa)</name>
    <dbReference type="NCBI Taxonomy" id="1111708"/>
    <lineage>
        <taxon>Bacteria</taxon>
        <taxon>Bacillati</taxon>
        <taxon>Cyanobacteriota</taxon>
        <taxon>Cyanophyceae</taxon>
        <taxon>Synechococcales</taxon>
        <taxon>Merismopediaceae</taxon>
        <taxon>Synechocystis</taxon>
    </lineage>
</organism>
<gene>
    <name type="ordered locus">sll0063</name>
</gene>
<dbReference type="EMBL" id="BA000022">
    <property type="protein sequence ID" value="BAA10283.1"/>
    <property type="molecule type" value="Genomic_DNA"/>
</dbReference>
<dbReference type="PIR" id="S74365">
    <property type="entry name" value="S74365"/>
</dbReference>
<dbReference type="SMR" id="Q55147"/>
<dbReference type="FunCoup" id="Q55147">
    <property type="interactions" value="350"/>
</dbReference>
<dbReference type="STRING" id="1148.gene:10499782"/>
<dbReference type="PaxDb" id="1148-1001141"/>
<dbReference type="EnsemblBacteria" id="BAA10283">
    <property type="protein sequence ID" value="BAA10283"/>
    <property type="gene ID" value="BAA10283"/>
</dbReference>
<dbReference type="KEGG" id="syn:sll0063"/>
<dbReference type="eggNOG" id="COG0628">
    <property type="taxonomic scope" value="Bacteria"/>
</dbReference>
<dbReference type="InParanoid" id="Q55147"/>
<dbReference type="PhylomeDB" id="Q55147"/>
<dbReference type="Proteomes" id="UP000001425">
    <property type="component" value="Chromosome"/>
</dbReference>
<dbReference type="GO" id="GO:0005886">
    <property type="term" value="C:plasma membrane"/>
    <property type="evidence" value="ECO:0007669"/>
    <property type="project" value="UniProtKB-SubCell"/>
</dbReference>
<dbReference type="GO" id="GO:0055085">
    <property type="term" value="P:transmembrane transport"/>
    <property type="evidence" value="ECO:0000318"/>
    <property type="project" value="GO_Central"/>
</dbReference>
<dbReference type="InterPro" id="IPR002549">
    <property type="entry name" value="AI-2E-like"/>
</dbReference>
<dbReference type="PANTHER" id="PTHR21716">
    <property type="entry name" value="TRANSMEMBRANE PROTEIN"/>
    <property type="match status" value="1"/>
</dbReference>
<dbReference type="PANTHER" id="PTHR21716:SF66">
    <property type="entry name" value="TRANSPORT PROTEIN SLL0063-RELATED"/>
    <property type="match status" value="1"/>
</dbReference>
<dbReference type="Pfam" id="PF01594">
    <property type="entry name" value="AI-2E_transport"/>
    <property type="match status" value="1"/>
</dbReference>
<dbReference type="PRINTS" id="PR01414">
    <property type="entry name" value="CCMBBIOGNSIS"/>
</dbReference>
<evidence type="ECO:0000255" key="1"/>
<evidence type="ECO:0000305" key="2"/>
<keyword id="KW-1003">Cell membrane</keyword>
<keyword id="KW-0472">Membrane</keyword>
<keyword id="KW-1185">Reference proteome</keyword>
<keyword id="KW-0812">Transmembrane</keyword>
<keyword id="KW-1133">Transmembrane helix</keyword>
<keyword id="KW-0813">Transport</keyword>
<sequence length="395" mass="43113">MTEPANNHPSPPPQNWLFKWWNSLNAITRLLVLVLGAPLMVLNARALSSIFGYFESLFVISLIASVIAFLLNYPVAWLEKQGAKRFVAASFVFLTALIIFTALGVTLIPLALSQAQQLVARLPDWLDSGQKQLVLLDQKAEILGWPVNFDGLIPQINSRLAAELQNLAGSTLNLALSLTVFTVVRLLDVLLTIILTFYLLLHTDDVWQSIIGWLPERFQKPFSDTLRRSFQNYFLGQLVSATCMALGLISGFLLLKVPFGLLFGLTVGVMALIPFGGSVGIVLVTFLVALRDIGMALQLLAVALVIQQIVENGIAPRVLGSVTGLNPFWVLISLLTGARIGGLLGVIVAVPSAVMIKEALGAIRSMKPLVPAPDHNQDPLYFKNQEEVQPLPPRP</sequence>
<feature type="chain" id="PRO_0000148321" description="Putative transport protein sll0063">
    <location>
        <begin position="1"/>
        <end position="395"/>
    </location>
</feature>
<feature type="transmembrane region" description="Helical" evidence="1">
    <location>
        <begin position="24"/>
        <end position="44"/>
    </location>
</feature>
<feature type="transmembrane region" description="Helical" evidence="1">
    <location>
        <begin position="50"/>
        <end position="70"/>
    </location>
</feature>
<feature type="transmembrane region" description="Helical" evidence="1">
    <location>
        <begin position="91"/>
        <end position="111"/>
    </location>
</feature>
<feature type="transmembrane region" description="Helical" evidence="1">
    <location>
        <begin position="180"/>
        <end position="200"/>
    </location>
</feature>
<feature type="transmembrane region" description="Helical" evidence="1">
    <location>
        <begin position="245"/>
        <end position="265"/>
    </location>
</feature>
<feature type="transmembrane region" description="Helical" evidence="1">
    <location>
        <begin position="269"/>
        <end position="289"/>
    </location>
</feature>
<feature type="transmembrane region" description="Helical" evidence="1">
    <location>
        <begin position="295"/>
        <end position="315"/>
    </location>
</feature>
<feature type="transmembrane region" description="Helical" evidence="1">
    <location>
        <begin position="328"/>
        <end position="348"/>
    </location>
</feature>
<reference key="1">
    <citation type="journal article" date="1995" name="DNA Res.">
        <title>Sequence analysis of the genome of the unicellular cyanobacterium Synechocystis sp. strain PCC6803. I. Sequence features in the 1 Mb region from map positions 64% to 92% of the genome.</title>
        <authorList>
            <person name="Kaneko T."/>
            <person name="Tanaka A."/>
            <person name="Sato S."/>
            <person name="Kotani H."/>
            <person name="Sazuka T."/>
            <person name="Miyajima N."/>
            <person name="Sugiura M."/>
            <person name="Tabata S."/>
        </authorList>
    </citation>
    <scope>NUCLEOTIDE SEQUENCE [LARGE SCALE GENOMIC DNA]</scope>
    <source>
        <strain>ATCC 27184 / PCC 6803 / N-1</strain>
    </source>
</reference>
<reference key="2">
    <citation type="journal article" date="1996" name="DNA Res.">
        <title>Sequence analysis of the genome of the unicellular cyanobacterium Synechocystis sp. strain PCC6803. II. Sequence determination of the entire genome and assignment of potential protein-coding regions.</title>
        <authorList>
            <person name="Kaneko T."/>
            <person name="Sato S."/>
            <person name="Kotani H."/>
            <person name="Tanaka A."/>
            <person name="Asamizu E."/>
            <person name="Nakamura Y."/>
            <person name="Miyajima N."/>
            <person name="Hirosawa M."/>
            <person name="Sugiura M."/>
            <person name="Sasamoto S."/>
            <person name="Kimura T."/>
            <person name="Hosouchi T."/>
            <person name="Matsuno A."/>
            <person name="Muraki A."/>
            <person name="Nakazaki N."/>
            <person name="Naruo K."/>
            <person name="Okumura S."/>
            <person name="Shimpo S."/>
            <person name="Takeuchi C."/>
            <person name="Wada T."/>
            <person name="Watanabe A."/>
            <person name="Yamada M."/>
            <person name="Yasuda M."/>
            <person name="Tabata S."/>
        </authorList>
    </citation>
    <scope>NUCLEOTIDE SEQUENCE [LARGE SCALE GENOMIC DNA]</scope>
    <source>
        <strain>ATCC 27184 / PCC 6803 / Kazusa</strain>
    </source>
</reference>
<comment type="subcellular location">
    <subcellularLocation>
        <location evidence="2">Cell membrane</location>
        <topology evidence="2">Multi-pass membrane protein</topology>
    </subcellularLocation>
</comment>
<comment type="similarity">
    <text evidence="2">Belongs to the autoinducer-2 exporter (AI-2E) (TC 2.A.86) family.</text>
</comment>
<protein>
    <recommendedName>
        <fullName>Putative transport protein sll0063</fullName>
    </recommendedName>
</protein>